<dbReference type="EC" id="3.1.3.-" evidence="3"/>
<dbReference type="EC" id="3.1.3.8" evidence="6"/>
<dbReference type="EMBL" id="CP017630">
    <property type="protein sequence ID" value="AOW30987.1"/>
    <property type="molecule type" value="Genomic_DNA"/>
</dbReference>
<dbReference type="RefSeq" id="XP_713416.2">
    <property type="nucleotide sequence ID" value="XM_708323.2"/>
</dbReference>
<dbReference type="SMR" id="A0A1D8PS71"/>
<dbReference type="FunCoup" id="A0A1D8PS71">
    <property type="interactions" value="488"/>
</dbReference>
<dbReference type="STRING" id="237561.A0A1D8PS71"/>
<dbReference type="EnsemblFungi" id="CR_02400W_A-T">
    <property type="protein sequence ID" value="CR_02400W_A-T-p1"/>
    <property type="gene ID" value="CR_02400W_A"/>
</dbReference>
<dbReference type="GeneID" id="3644929"/>
<dbReference type="KEGG" id="cal:CAALFM_CR02400WA"/>
<dbReference type="CGD" id="CAL0000197375">
    <property type="gene designation" value="PHO112"/>
</dbReference>
<dbReference type="VEuPathDB" id="FungiDB:CR_02400W_A"/>
<dbReference type="eggNOG" id="KOG1382">
    <property type="taxonomic scope" value="Eukaryota"/>
</dbReference>
<dbReference type="InParanoid" id="A0A1D8PS71"/>
<dbReference type="OrthoDB" id="6509975at2759"/>
<dbReference type="BRENDA" id="3.1.3.26">
    <property type="organism ID" value="1096"/>
</dbReference>
<dbReference type="PHI-base" id="PHI:7719"/>
<dbReference type="Proteomes" id="UP000000559">
    <property type="component" value="Chromosome R"/>
</dbReference>
<dbReference type="GO" id="GO:0009986">
    <property type="term" value="C:cell surface"/>
    <property type="evidence" value="ECO:0000314"/>
    <property type="project" value="CGD"/>
</dbReference>
<dbReference type="GO" id="GO:0030287">
    <property type="term" value="C:cell wall-bounded periplasmic space"/>
    <property type="evidence" value="ECO:0000314"/>
    <property type="project" value="CGD"/>
</dbReference>
<dbReference type="GO" id="GO:0005576">
    <property type="term" value="C:extracellular region"/>
    <property type="evidence" value="ECO:0007669"/>
    <property type="project" value="UniProtKB-SubCell"/>
</dbReference>
<dbReference type="GO" id="GO:0009277">
    <property type="term" value="C:fungal-type cell wall"/>
    <property type="evidence" value="ECO:0000318"/>
    <property type="project" value="GO_Central"/>
</dbReference>
<dbReference type="GO" id="GO:0008707">
    <property type="term" value="F:4-phytase activity"/>
    <property type="evidence" value="ECO:0000315"/>
    <property type="project" value="CGD"/>
</dbReference>
<dbReference type="GO" id="GO:0003993">
    <property type="term" value="F:acid phosphatase activity"/>
    <property type="evidence" value="ECO:0000318"/>
    <property type="project" value="GO_Central"/>
</dbReference>
<dbReference type="GO" id="GO:0030448">
    <property type="term" value="P:hyphal growth"/>
    <property type="evidence" value="ECO:0000315"/>
    <property type="project" value="CGD"/>
</dbReference>
<dbReference type="CDD" id="cd07061">
    <property type="entry name" value="HP_HAP_like"/>
    <property type="match status" value="1"/>
</dbReference>
<dbReference type="FunFam" id="3.40.50.1240:FF:000021">
    <property type="entry name" value="Acid phosphatase"/>
    <property type="match status" value="1"/>
</dbReference>
<dbReference type="Gene3D" id="3.40.50.1240">
    <property type="entry name" value="Phosphoglycerate mutase-like"/>
    <property type="match status" value="1"/>
</dbReference>
<dbReference type="InterPro" id="IPR033379">
    <property type="entry name" value="Acid_Pase_AS"/>
</dbReference>
<dbReference type="InterPro" id="IPR000560">
    <property type="entry name" value="His_Pase_clade-2"/>
</dbReference>
<dbReference type="InterPro" id="IPR029033">
    <property type="entry name" value="His_PPase_superfam"/>
</dbReference>
<dbReference type="InterPro" id="IPR016274">
    <property type="entry name" value="Histidine_acid_Pase_euk"/>
</dbReference>
<dbReference type="PANTHER" id="PTHR20963:SF18">
    <property type="entry name" value="ACID PHOSPHATASE PHO11-RELATED"/>
    <property type="match status" value="1"/>
</dbReference>
<dbReference type="PANTHER" id="PTHR20963">
    <property type="entry name" value="MULTIPLE INOSITOL POLYPHOSPHATE PHOSPHATASE-RELATED"/>
    <property type="match status" value="1"/>
</dbReference>
<dbReference type="Pfam" id="PF00328">
    <property type="entry name" value="His_Phos_2"/>
    <property type="match status" value="1"/>
</dbReference>
<dbReference type="PIRSF" id="PIRSF000894">
    <property type="entry name" value="Acid_phosphatase"/>
    <property type="match status" value="1"/>
</dbReference>
<dbReference type="SUPFAM" id="SSF53254">
    <property type="entry name" value="Phosphoglycerate mutase-like"/>
    <property type="match status" value="1"/>
</dbReference>
<dbReference type="PROSITE" id="PS00778">
    <property type="entry name" value="HIS_ACID_PHOSPHAT_2"/>
    <property type="match status" value="1"/>
</dbReference>
<proteinExistence type="evidence at protein level"/>
<comment type="function">
    <text evidence="3 6">Catalyzes the phosphate monoester hydrolysis of phytic acid (myo-inositol hexakisphosphate), which results in the stepwise formation of myo-inositol pentakis-, tetrakis-, tris-, bis-, and monophosphates, as well as the liberation of inorganic phosphate (PubMed:29216308). Myo-inositol 2-monophosphate is the end product (By similarity). Responsible of about 25% of the phytase activity (PubMed:29216308). The residual phytase activity might be contributed by other cytosolic or cellular enzymes such as acid phosphatase that also degraded the substrate phytate (PubMed:29216308). Is essential for human tissue damage during infection (PubMed:29216308).</text>
</comment>
<comment type="catalytic activity">
    <reaction evidence="6">
        <text>1D-myo-inositol hexakisphosphate + H2O = 1D-myo-inositol 1,2,4,5,6-pentakisphosphate + phosphate</text>
        <dbReference type="Rhea" id="RHEA:16989"/>
        <dbReference type="ChEBI" id="CHEBI:15377"/>
        <dbReference type="ChEBI" id="CHEBI:43474"/>
        <dbReference type="ChEBI" id="CHEBI:57798"/>
        <dbReference type="ChEBI" id="CHEBI:58130"/>
        <dbReference type="EC" id="3.1.3.8"/>
    </reaction>
    <physiologicalReaction direction="left-to-right" evidence="6">
        <dbReference type="Rhea" id="RHEA:16990"/>
    </physiologicalReaction>
</comment>
<comment type="catalytic activity">
    <reaction evidence="3">
        <text>1D-myo-inositol 1,2,4,5,6-pentakisphosphate + H2O = 1D-myo-inositol 1,2,5,6-tetrakisphosphate + phosphate</text>
        <dbReference type="Rhea" id="RHEA:77115"/>
        <dbReference type="ChEBI" id="CHEBI:15377"/>
        <dbReference type="ChEBI" id="CHEBI:43474"/>
        <dbReference type="ChEBI" id="CHEBI:57798"/>
        <dbReference type="ChEBI" id="CHEBI:195535"/>
    </reaction>
    <physiologicalReaction direction="left-to-right" evidence="3">
        <dbReference type="Rhea" id="RHEA:77116"/>
    </physiologicalReaction>
</comment>
<comment type="catalytic activity">
    <reaction evidence="3">
        <text>1D-myo-inositol 1,2,5,6-tetrakisphosphate + H2O = 1D-myo-inositol 1,2,6-trisphosphate + phosphate</text>
        <dbReference type="Rhea" id="RHEA:77119"/>
        <dbReference type="ChEBI" id="CHEBI:15377"/>
        <dbReference type="ChEBI" id="CHEBI:43474"/>
        <dbReference type="ChEBI" id="CHEBI:195535"/>
        <dbReference type="ChEBI" id="CHEBI:195537"/>
    </reaction>
    <physiologicalReaction direction="left-to-right" evidence="3">
        <dbReference type="Rhea" id="RHEA:77120"/>
    </physiologicalReaction>
</comment>
<comment type="catalytic activity">
    <reaction evidence="3">
        <text>1D-myo-inositol 1,2,6-trisphosphate + H2O = 1D-myo-inositol 1,2-bisphosphate + phosphate</text>
        <dbReference type="Rhea" id="RHEA:77131"/>
        <dbReference type="ChEBI" id="CHEBI:15377"/>
        <dbReference type="ChEBI" id="CHEBI:43474"/>
        <dbReference type="ChEBI" id="CHEBI:195537"/>
        <dbReference type="ChEBI" id="CHEBI:195539"/>
    </reaction>
    <physiologicalReaction direction="left-to-right" evidence="3">
        <dbReference type="Rhea" id="RHEA:77132"/>
    </physiologicalReaction>
</comment>
<comment type="catalytic activity">
    <reaction evidence="3">
        <text>1D-myo-inositol 1,2-bisphosphate + H2O = 1D-myo-inositol 2-phosphate + phosphate</text>
        <dbReference type="Rhea" id="RHEA:77135"/>
        <dbReference type="ChEBI" id="CHEBI:15377"/>
        <dbReference type="ChEBI" id="CHEBI:43474"/>
        <dbReference type="ChEBI" id="CHEBI:84142"/>
        <dbReference type="ChEBI" id="CHEBI:195539"/>
    </reaction>
    <physiologicalReaction direction="left-to-right" evidence="3">
        <dbReference type="Rhea" id="RHEA:77136"/>
    </physiologicalReaction>
</comment>
<comment type="subunit">
    <text evidence="1">Monomer.</text>
</comment>
<comment type="subcellular location">
    <subcellularLocation>
        <location evidence="8">Secreted</location>
    </subcellularLocation>
</comment>
<comment type="induction">
    <text evidence="5">Expression is regulated by the HAP43 transcription factor.</text>
</comment>
<comment type="disruption phenotype">
    <text evidence="6">Leads to decreased phytase activity, reduced ability to form hyphae, attenuated in vitro adhesion, and reduced ability to penetrate human epithelium.</text>
</comment>
<comment type="similarity">
    <text evidence="8">Belongs to the histidine acid phosphatase family.</text>
</comment>
<organism>
    <name type="scientific">Candida albicans (strain SC5314 / ATCC MYA-2876)</name>
    <name type="common">Yeast</name>
    <dbReference type="NCBI Taxonomy" id="237561"/>
    <lineage>
        <taxon>Eukaryota</taxon>
        <taxon>Fungi</taxon>
        <taxon>Dikarya</taxon>
        <taxon>Ascomycota</taxon>
        <taxon>Saccharomycotina</taxon>
        <taxon>Pichiomycetes</taxon>
        <taxon>Debaryomycetaceae</taxon>
        <taxon>Candida/Lodderomyces clade</taxon>
        <taxon>Candida</taxon>
    </lineage>
</organism>
<evidence type="ECO:0000250" key="1">
    <source>
        <dbReference type="UniProtKB" id="O00085"/>
    </source>
</evidence>
<evidence type="ECO:0000250" key="2">
    <source>
        <dbReference type="UniProtKB" id="O00092"/>
    </source>
</evidence>
<evidence type="ECO:0000250" key="3">
    <source>
        <dbReference type="UniProtKB" id="P34752"/>
    </source>
</evidence>
<evidence type="ECO:0000255" key="4">
    <source>
        <dbReference type="PROSITE-ProRule" id="PRU00498"/>
    </source>
</evidence>
<evidence type="ECO:0000269" key="5">
    <source>
    </source>
</evidence>
<evidence type="ECO:0000269" key="6">
    <source>
    </source>
</evidence>
<evidence type="ECO:0000303" key="7">
    <source>
    </source>
</evidence>
<evidence type="ECO:0000305" key="8"/>
<gene>
    <name type="primary">PHO112</name>
    <name type="ordered locus">CAALFM_CR02400WA</name>
    <name type="ordered locus">orf19.11211</name>
</gene>
<protein>
    <recommendedName>
        <fullName evidence="7">Phytase PHO112</fullName>
        <ecNumber evidence="3">3.1.3.-</ecNumber>
        <ecNumber evidence="6">3.1.3.8</ecNumber>
    </recommendedName>
    <alternativeName>
        <fullName evidence="8">Histidine acid phosphatase PHO112</fullName>
        <shortName evidence="8">HAP</shortName>
    </alternativeName>
    <alternativeName>
        <fullName evidence="8">Myo-inositol hexakisphosphate phosphohydrolase PHO112</fullName>
    </alternativeName>
    <alternativeName>
        <fullName evidence="8">Myo-inositol-hexaphosphate 3-phosphohydrolase PHO112</fullName>
    </alternativeName>
</protein>
<keyword id="KW-1015">Disulfide bond</keyword>
<keyword id="KW-0325">Glycoprotein</keyword>
<keyword id="KW-0378">Hydrolase</keyword>
<keyword id="KW-1185">Reference proteome</keyword>
<keyword id="KW-0964">Secreted</keyword>
<keyword id="KW-0843">Virulence</keyword>
<reference key="1">
    <citation type="journal article" date="2004" name="Proc. Natl. Acad. Sci. U.S.A.">
        <title>The diploid genome sequence of Candida albicans.</title>
        <authorList>
            <person name="Jones T."/>
            <person name="Federspiel N.A."/>
            <person name="Chibana H."/>
            <person name="Dungan J."/>
            <person name="Kalman S."/>
            <person name="Magee B.B."/>
            <person name="Newport G."/>
            <person name="Thorstenson Y.R."/>
            <person name="Agabian N."/>
            <person name="Magee P.T."/>
            <person name="Davis R.W."/>
            <person name="Scherer S."/>
        </authorList>
    </citation>
    <scope>NUCLEOTIDE SEQUENCE [LARGE SCALE GENOMIC DNA]</scope>
    <source>
        <strain>SC5314 / ATCC MYA-2876</strain>
    </source>
</reference>
<reference key="2">
    <citation type="journal article" date="2007" name="Genome Biol.">
        <title>Assembly of the Candida albicans genome into sixteen supercontigs aligned on the eight chromosomes.</title>
        <authorList>
            <person name="van het Hoog M."/>
            <person name="Rast T.J."/>
            <person name="Martchenko M."/>
            <person name="Grindle S."/>
            <person name="Dignard D."/>
            <person name="Hogues H."/>
            <person name="Cuomo C."/>
            <person name="Berriman M."/>
            <person name="Scherer S."/>
            <person name="Magee B.B."/>
            <person name="Whiteway M."/>
            <person name="Chibana H."/>
            <person name="Nantel A."/>
            <person name="Magee P.T."/>
        </authorList>
    </citation>
    <scope>GENOME REANNOTATION</scope>
    <source>
        <strain>SC5314 / ATCC MYA-2876</strain>
    </source>
</reference>
<reference key="3">
    <citation type="journal article" date="2013" name="Genome Biol.">
        <title>Assembly of a phased diploid Candida albicans genome facilitates allele-specific measurements and provides a simple model for repeat and indel structure.</title>
        <authorList>
            <person name="Muzzey D."/>
            <person name="Schwartz K."/>
            <person name="Weissman J.S."/>
            <person name="Sherlock G."/>
        </authorList>
    </citation>
    <scope>NUCLEOTIDE SEQUENCE [LARGE SCALE GENOMIC DNA]</scope>
    <scope>GENOME REANNOTATION</scope>
    <source>
        <strain>SC5314 / ATCC MYA-2876</strain>
    </source>
</reference>
<reference key="4">
    <citation type="journal article" date="2011" name="J. Biol. Chem.">
        <title>Cap2-HAP complex is a critical transcriptional regulator that has dual but contrasting roles in regulation of iron homeostasis in Candida albicans.</title>
        <authorList>
            <person name="Singh R.P."/>
            <person name="Prasad H.K."/>
            <person name="Sinha I."/>
            <person name="Agarwal N."/>
            <person name="Natarajan K."/>
        </authorList>
    </citation>
    <scope>INDUCTION</scope>
</reference>
<reference key="5">
    <citation type="journal article" date="2017" name="PLoS ONE">
        <title>Candida albicans orf19.3727 encodes phytase activity and is essential for human tissue damage.</title>
        <authorList>
            <person name="Tsang P.W."/>
            <person name="Fong W.P."/>
            <person name="Samaranayake L.P."/>
        </authorList>
    </citation>
    <scope>FUNCTION</scope>
    <scope>DISRUPTION PHENOTYPE</scope>
    <scope>CATALYTIC ACTIVITY</scope>
</reference>
<accession>A0A1D8PS71</accession>
<feature type="chain" id="PRO_0000459179" description="Phytase PHO112">
    <location>
        <begin position="1"/>
        <end position="461"/>
    </location>
</feature>
<feature type="active site" description="Nucleophile" evidence="2">
    <location>
        <position position="73"/>
    </location>
</feature>
<feature type="binding site" evidence="3">
    <location>
        <position position="72"/>
    </location>
    <ligand>
        <name>1D-myo-inositol hexakisphosphate</name>
        <dbReference type="ChEBI" id="CHEBI:58130"/>
    </ligand>
</feature>
<feature type="binding site" evidence="3">
    <location>
        <position position="73"/>
    </location>
    <ligand>
        <name>1D-myo-inositol hexakisphosphate</name>
        <dbReference type="ChEBI" id="CHEBI:58130"/>
    </ligand>
</feature>
<feature type="binding site" evidence="3">
    <location>
        <position position="76"/>
    </location>
    <ligand>
        <name>1D-myo-inositol hexakisphosphate</name>
        <dbReference type="ChEBI" id="CHEBI:58130"/>
    </ligand>
</feature>
<feature type="binding site" evidence="3">
    <location>
        <position position="79"/>
    </location>
    <ligand>
        <name>1D-myo-inositol hexakisphosphate</name>
        <dbReference type="ChEBI" id="CHEBI:58130"/>
    </ligand>
</feature>
<feature type="binding site" evidence="3">
    <location>
        <position position="169"/>
    </location>
    <ligand>
        <name>1D-myo-inositol hexakisphosphate</name>
        <dbReference type="ChEBI" id="CHEBI:58130"/>
    </ligand>
</feature>
<feature type="binding site" evidence="3">
    <location>
        <position position="293"/>
    </location>
    <ligand>
        <name>1D-myo-inositol hexakisphosphate</name>
        <dbReference type="ChEBI" id="CHEBI:58130"/>
    </ligand>
</feature>
<feature type="binding site" evidence="3">
    <location>
        <position position="334"/>
    </location>
    <ligand>
        <name>1D-myo-inositol hexakisphosphate</name>
        <dbReference type="ChEBI" id="CHEBI:58130"/>
    </ligand>
</feature>
<feature type="binding site" evidence="3">
    <location>
        <position position="335"/>
    </location>
    <ligand>
        <name>1D-myo-inositol hexakisphosphate</name>
        <dbReference type="ChEBI" id="CHEBI:58130"/>
    </ligand>
</feature>
<feature type="glycosylation site" description="N-linked (GlcNAc...) asparagine" evidence="4">
    <location>
        <position position="97"/>
    </location>
</feature>
<feature type="glycosylation site" description="N-linked (GlcNAc...) asparagine" evidence="4">
    <location>
        <position position="157"/>
    </location>
</feature>
<feature type="glycosylation site" description="N-linked (GlcNAc...) asparagine" evidence="4">
    <location>
        <position position="229"/>
    </location>
</feature>
<feature type="glycosylation site" description="N-linked (GlcNAc...) asparagine" evidence="4">
    <location>
        <position position="248"/>
    </location>
</feature>
<feature type="glycosylation site" description="N-linked (GlcNAc...) asparagine" evidence="4">
    <location>
        <position position="302"/>
    </location>
</feature>
<feature type="glycosylation site" description="N-linked (GlcNAc...) asparagine" evidence="4">
    <location>
        <position position="313"/>
    </location>
</feature>
<feature type="glycosylation site" description="N-linked (GlcNAc...) asparagine" evidence="4">
    <location>
        <position position="437"/>
    </location>
</feature>
<feature type="glycosylation site" description="N-linked (GlcNAc...) asparagine" evidence="4">
    <location>
        <position position="452"/>
    </location>
</feature>
<feature type="disulfide bond" evidence="3">
    <location>
        <begin position="62"/>
        <end position="384"/>
    </location>
</feature>
<feature type="disulfide bond" evidence="3">
    <location>
        <begin position="261"/>
        <end position="274"/>
    </location>
</feature>
<feature type="disulfide bond" evidence="3">
    <location>
        <begin position="404"/>
        <end position="412"/>
    </location>
</feature>
<sequence length="461" mass="51296">MVSVSKLINNGLLLTSQSVFQDVATPQQASVQQYNILNFLGGSAPYIQRNGYGISTDIPAGCEIAQIQLYSRHGERYPSKSNGKSLEAIYAKFKNYNGTFKGDLSFLNDYTYFVKDQSNYAKETSPKNSEGTYAGTTNALRHGAAFRAKYGSLYKENSTLPIFTSNSNRVHETSKYFARGFLGDDYEEGKTVKFNIISEDADVGANSLTPRSACSKNKESSSSTAKKYNTTYLNAIAERLVKPNPGLNLTTSDVNNLFSWCAYEINVRGSSPFCDLFTNEEFIKNSYGNDLSKYYSNGAGNNYTRIIGSVILNSSLELLKDTENSNQVWLSFAHDTDLEIFHSALGLLEPAEDLPTSYIPFPNPYVHSSIVPQGARIYTEKLQCGNDAYVRYIINDAVVPIPKCATGPGFSCKLDDFENFVKERIGDVDFIKQCGVNSTYPSELTFYWDYKNVTYNAPLEL</sequence>
<name>PHYA_CANAL</name>